<sequence length="300" mass="33892">MNDTTATRCGYVAIVGRPNVGKSTLLNHILGQKLAITSRKPQTTRHNMLGIKTEGAVQAIYVDTPGMHKNGEKALNRYMNKTASAALKDVDVVIFVVDRTRWTDEDQMVLERVQYVQGPVILAINKTDRIEDKSDLMPHLEWLQGQLPNASIVPISAQHGHNLEALESLIASHLPENDHFFPEDQITDRSSRFLAAELVREKIMRQLGAELPYQITVEIEEFKQQGRTLHIHALILVERDGQKKIIIGDKGDRIKRIGSDARRDMELLFDSKVMLNLWVKVKGGWSDDERALRSLGYGDL</sequence>
<keyword id="KW-0997">Cell inner membrane</keyword>
<keyword id="KW-1003">Cell membrane</keyword>
<keyword id="KW-0963">Cytoplasm</keyword>
<keyword id="KW-0342">GTP-binding</keyword>
<keyword id="KW-0472">Membrane</keyword>
<keyword id="KW-0547">Nucleotide-binding</keyword>
<keyword id="KW-0690">Ribosome biogenesis</keyword>
<keyword id="KW-0694">RNA-binding</keyword>
<keyword id="KW-0699">rRNA-binding</keyword>
<proteinExistence type="inferred from homology"/>
<dbReference type="EMBL" id="CP000075">
    <property type="protein sequence ID" value="AAY38980.1"/>
    <property type="molecule type" value="Genomic_DNA"/>
</dbReference>
<dbReference type="RefSeq" id="WP_003363707.1">
    <property type="nucleotide sequence ID" value="NC_007005.1"/>
</dbReference>
<dbReference type="RefSeq" id="YP_237018.1">
    <property type="nucleotide sequence ID" value="NC_007005.1"/>
</dbReference>
<dbReference type="SMR" id="Q4ZPE2"/>
<dbReference type="STRING" id="205918.Psyr_3950"/>
<dbReference type="GeneID" id="77279804"/>
<dbReference type="KEGG" id="psb:Psyr_3950"/>
<dbReference type="PATRIC" id="fig|205918.7.peg.4067"/>
<dbReference type="eggNOG" id="COG1159">
    <property type="taxonomic scope" value="Bacteria"/>
</dbReference>
<dbReference type="HOGENOM" id="CLU_038009_1_2_6"/>
<dbReference type="OrthoDB" id="9805918at2"/>
<dbReference type="Proteomes" id="UP000000426">
    <property type="component" value="Chromosome"/>
</dbReference>
<dbReference type="GO" id="GO:0005829">
    <property type="term" value="C:cytosol"/>
    <property type="evidence" value="ECO:0007669"/>
    <property type="project" value="TreeGrafter"/>
</dbReference>
<dbReference type="GO" id="GO:0005886">
    <property type="term" value="C:plasma membrane"/>
    <property type="evidence" value="ECO:0007669"/>
    <property type="project" value="UniProtKB-SubCell"/>
</dbReference>
<dbReference type="GO" id="GO:0005525">
    <property type="term" value="F:GTP binding"/>
    <property type="evidence" value="ECO:0007669"/>
    <property type="project" value="UniProtKB-UniRule"/>
</dbReference>
<dbReference type="GO" id="GO:0003924">
    <property type="term" value="F:GTPase activity"/>
    <property type="evidence" value="ECO:0007669"/>
    <property type="project" value="UniProtKB-UniRule"/>
</dbReference>
<dbReference type="GO" id="GO:0043024">
    <property type="term" value="F:ribosomal small subunit binding"/>
    <property type="evidence" value="ECO:0007669"/>
    <property type="project" value="TreeGrafter"/>
</dbReference>
<dbReference type="GO" id="GO:0070181">
    <property type="term" value="F:small ribosomal subunit rRNA binding"/>
    <property type="evidence" value="ECO:0007669"/>
    <property type="project" value="UniProtKB-UniRule"/>
</dbReference>
<dbReference type="GO" id="GO:0000028">
    <property type="term" value="P:ribosomal small subunit assembly"/>
    <property type="evidence" value="ECO:0007669"/>
    <property type="project" value="TreeGrafter"/>
</dbReference>
<dbReference type="CDD" id="cd04163">
    <property type="entry name" value="Era"/>
    <property type="match status" value="1"/>
</dbReference>
<dbReference type="CDD" id="cd22534">
    <property type="entry name" value="KH-II_Era"/>
    <property type="match status" value="1"/>
</dbReference>
<dbReference type="FunFam" id="3.30.300.20:FF:000003">
    <property type="entry name" value="GTPase Era"/>
    <property type="match status" value="1"/>
</dbReference>
<dbReference type="FunFam" id="3.40.50.300:FF:000094">
    <property type="entry name" value="GTPase Era"/>
    <property type="match status" value="1"/>
</dbReference>
<dbReference type="Gene3D" id="3.30.300.20">
    <property type="match status" value="1"/>
</dbReference>
<dbReference type="Gene3D" id="3.40.50.300">
    <property type="entry name" value="P-loop containing nucleotide triphosphate hydrolases"/>
    <property type="match status" value="1"/>
</dbReference>
<dbReference type="HAMAP" id="MF_00367">
    <property type="entry name" value="GTPase_Era"/>
    <property type="match status" value="1"/>
</dbReference>
<dbReference type="InterPro" id="IPR030388">
    <property type="entry name" value="G_ERA_dom"/>
</dbReference>
<dbReference type="InterPro" id="IPR006073">
    <property type="entry name" value="GTP-bd"/>
</dbReference>
<dbReference type="InterPro" id="IPR005662">
    <property type="entry name" value="GTPase_Era-like"/>
</dbReference>
<dbReference type="InterPro" id="IPR015946">
    <property type="entry name" value="KH_dom-like_a/b"/>
</dbReference>
<dbReference type="InterPro" id="IPR004044">
    <property type="entry name" value="KH_dom_type_2"/>
</dbReference>
<dbReference type="InterPro" id="IPR009019">
    <property type="entry name" value="KH_sf_prok-type"/>
</dbReference>
<dbReference type="InterPro" id="IPR027417">
    <property type="entry name" value="P-loop_NTPase"/>
</dbReference>
<dbReference type="InterPro" id="IPR005225">
    <property type="entry name" value="Small_GTP-bd"/>
</dbReference>
<dbReference type="NCBIfam" id="TIGR00436">
    <property type="entry name" value="era"/>
    <property type="match status" value="1"/>
</dbReference>
<dbReference type="NCBIfam" id="NF000908">
    <property type="entry name" value="PRK00089.1"/>
    <property type="match status" value="1"/>
</dbReference>
<dbReference type="NCBIfam" id="TIGR00231">
    <property type="entry name" value="small_GTP"/>
    <property type="match status" value="1"/>
</dbReference>
<dbReference type="PANTHER" id="PTHR42698">
    <property type="entry name" value="GTPASE ERA"/>
    <property type="match status" value="1"/>
</dbReference>
<dbReference type="PANTHER" id="PTHR42698:SF1">
    <property type="entry name" value="GTPASE ERA, MITOCHONDRIAL"/>
    <property type="match status" value="1"/>
</dbReference>
<dbReference type="Pfam" id="PF07650">
    <property type="entry name" value="KH_2"/>
    <property type="match status" value="1"/>
</dbReference>
<dbReference type="Pfam" id="PF01926">
    <property type="entry name" value="MMR_HSR1"/>
    <property type="match status" value="1"/>
</dbReference>
<dbReference type="PRINTS" id="PR00326">
    <property type="entry name" value="GTP1OBG"/>
</dbReference>
<dbReference type="SUPFAM" id="SSF52540">
    <property type="entry name" value="P-loop containing nucleoside triphosphate hydrolases"/>
    <property type="match status" value="1"/>
</dbReference>
<dbReference type="SUPFAM" id="SSF54814">
    <property type="entry name" value="Prokaryotic type KH domain (KH-domain type II)"/>
    <property type="match status" value="1"/>
</dbReference>
<dbReference type="PROSITE" id="PS51713">
    <property type="entry name" value="G_ERA"/>
    <property type="match status" value="1"/>
</dbReference>
<dbReference type="PROSITE" id="PS50823">
    <property type="entry name" value="KH_TYPE_2"/>
    <property type="match status" value="1"/>
</dbReference>
<evidence type="ECO:0000255" key="1">
    <source>
        <dbReference type="HAMAP-Rule" id="MF_00367"/>
    </source>
</evidence>
<evidence type="ECO:0000255" key="2">
    <source>
        <dbReference type="PROSITE-ProRule" id="PRU01050"/>
    </source>
</evidence>
<name>ERA_PSEU2</name>
<protein>
    <recommendedName>
        <fullName evidence="1">GTPase Era</fullName>
    </recommendedName>
</protein>
<reference key="1">
    <citation type="journal article" date="2005" name="Proc. Natl. Acad. Sci. U.S.A.">
        <title>Comparison of the complete genome sequences of Pseudomonas syringae pv. syringae B728a and pv. tomato DC3000.</title>
        <authorList>
            <person name="Feil H."/>
            <person name="Feil W.S."/>
            <person name="Chain P."/>
            <person name="Larimer F."/>
            <person name="Dibartolo G."/>
            <person name="Copeland A."/>
            <person name="Lykidis A."/>
            <person name="Trong S."/>
            <person name="Nolan M."/>
            <person name="Goltsman E."/>
            <person name="Thiel J."/>
            <person name="Malfatti S."/>
            <person name="Loper J.E."/>
            <person name="Lapidus A."/>
            <person name="Detter J.C."/>
            <person name="Land M."/>
            <person name="Richardson P.M."/>
            <person name="Kyrpides N.C."/>
            <person name="Ivanova N."/>
            <person name="Lindow S.E."/>
        </authorList>
    </citation>
    <scope>NUCLEOTIDE SEQUENCE [LARGE SCALE GENOMIC DNA]</scope>
    <source>
        <strain>B728a</strain>
    </source>
</reference>
<gene>
    <name evidence="1" type="primary">era</name>
    <name type="ordered locus">Psyr_3950</name>
</gene>
<feature type="chain" id="PRO_1000079726" description="GTPase Era">
    <location>
        <begin position="1"/>
        <end position="300"/>
    </location>
</feature>
<feature type="domain" description="Era-type G" evidence="2">
    <location>
        <begin position="8"/>
        <end position="176"/>
    </location>
</feature>
<feature type="domain" description="KH type-2" evidence="1">
    <location>
        <begin position="199"/>
        <end position="283"/>
    </location>
</feature>
<feature type="region of interest" description="G1" evidence="2">
    <location>
        <begin position="16"/>
        <end position="23"/>
    </location>
</feature>
<feature type="region of interest" description="G2" evidence="2">
    <location>
        <begin position="42"/>
        <end position="46"/>
    </location>
</feature>
<feature type="region of interest" description="G3" evidence="2">
    <location>
        <begin position="63"/>
        <end position="66"/>
    </location>
</feature>
<feature type="region of interest" description="G4" evidence="2">
    <location>
        <begin position="125"/>
        <end position="128"/>
    </location>
</feature>
<feature type="region of interest" description="G5" evidence="2">
    <location>
        <begin position="155"/>
        <end position="157"/>
    </location>
</feature>
<feature type="binding site" evidence="1">
    <location>
        <begin position="16"/>
        <end position="23"/>
    </location>
    <ligand>
        <name>GTP</name>
        <dbReference type="ChEBI" id="CHEBI:37565"/>
    </ligand>
</feature>
<feature type="binding site" evidence="1">
    <location>
        <begin position="63"/>
        <end position="67"/>
    </location>
    <ligand>
        <name>GTP</name>
        <dbReference type="ChEBI" id="CHEBI:37565"/>
    </ligand>
</feature>
<feature type="binding site" evidence="1">
    <location>
        <begin position="125"/>
        <end position="128"/>
    </location>
    <ligand>
        <name>GTP</name>
        <dbReference type="ChEBI" id="CHEBI:37565"/>
    </ligand>
</feature>
<comment type="function">
    <text evidence="1">An essential GTPase that binds both GDP and GTP, with rapid nucleotide exchange. Plays a role in 16S rRNA processing and 30S ribosomal subunit biogenesis and possibly also in cell cycle regulation and energy metabolism.</text>
</comment>
<comment type="subunit">
    <text evidence="1">Monomer.</text>
</comment>
<comment type="subcellular location">
    <subcellularLocation>
        <location>Cytoplasm</location>
    </subcellularLocation>
    <subcellularLocation>
        <location evidence="1">Cell inner membrane</location>
        <topology evidence="1">Peripheral membrane protein</topology>
    </subcellularLocation>
</comment>
<comment type="similarity">
    <text evidence="1 2">Belongs to the TRAFAC class TrmE-Era-EngA-EngB-Septin-like GTPase superfamily. Era GTPase family.</text>
</comment>
<organism>
    <name type="scientific">Pseudomonas syringae pv. syringae (strain B728a)</name>
    <dbReference type="NCBI Taxonomy" id="205918"/>
    <lineage>
        <taxon>Bacteria</taxon>
        <taxon>Pseudomonadati</taxon>
        <taxon>Pseudomonadota</taxon>
        <taxon>Gammaproteobacteria</taxon>
        <taxon>Pseudomonadales</taxon>
        <taxon>Pseudomonadaceae</taxon>
        <taxon>Pseudomonas</taxon>
        <taxon>Pseudomonas syringae</taxon>
    </lineage>
</organism>
<accession>Q4ZPE2</accession>